<comment type="function">
    <text evidence="1">Catalyzes the transfer of acetyl from acetyl-CoA to desacetylmycothiol (Cys-GlcN-Ins) to form mycothiol.</text>
</comment>
<comment type="catalytic activity">
    <reaction evidence="1">
        <text>1D-myo-inositol 2-(L-cysteinylamino)-2-deoxy-alpha-D-glucopyranoside + acetyl-CoA = mycothiol + CoA + H(+)</text>
        <dbReference type="Rhea" id="RHEA:26172"/>
        <dbReference type="ChEBI" id="CHEBI:15378"/>
        <dbReference type="ChEBI" id="CHEBI:16768"/>
        <dbReference type="ChEBI" id="CHEBI:57287"/>
        <dbReference type="ChEBI" id="CHEBI:57288"/>
        <dbReference type="ChEBI" id="CHEBI:58887"/>
        <dbReference type="EC" id="2.3.1.189"/>
    </reaction>
</comment>
<comment type="subunit">
    <text evidence="1">Monomer.</text>
</comment>
<comment type="similarity">
    <text evidence="1">Belongs to the acetyltransferase family. MshD subfamily.</text>
</comment>
<gene>
    <name evidence="1" type="primary">mshD</name>
    <name type="ordered locus">SAV_4058</name>
</gene>
<feature type="chain" id="PRO_0000400301" description="Mycothiol acetyltransferase">
    <location>
        <begin position="1"/>
        <end position="308"/>
    </location>
</feature>
<feature type="domain" description="N-acetyltransferase 1" evidence="1">
    <location>
        <begin position="16"/>
        <end position="152"/>
    </location>
</feature>
<feature type="domain" description="N-acetyltransferase 2" evidence="1">
    <location>
        <begin position="165"/>
        <end position="308"/>
    </location>
</feature>
<feature type="binding site" evidence="1">
    <location>
        <position position="47"/>
    </location>
    <ligand>
        <name>1D-myo-inositol 2-(L-cysteinylamino)-2-deoxy-alpha-D-glucopyranoside</name>
        <dbReference type="ChEBI" id="CHEBI:58887"/>
    </ligand>
</feature>
<feature type="binding site" evidence="1">
    <location>
        <begin position="91"/>
        <end position="93"/>
    </location>
    <ligand>
        <name>acetyl-CoA</name>
        <dbReference type="ChEBI" id="CHEBI:57288"/>
        <label>1</label>
    </ligand>
</feature>
<feature type="binding site" evidence="1">
    <location>
        <position position="192"/>
    </location>
    <ligand>
        <name>1D-myo-inositol 2-(L-cysteinylamino)-2-deoxy-alpha-D-glucopyranoside</name>
        <dbReference type="ChEBI" id="CHEBI:58887"/>
    </ligand>
</feature>
<feature type="binding site" evidence="1">
    <location>
        <position position="231"/>
    </location>
    <ligand>
        <name>1D-myo-inositol 2-(L-cysteinylamino)-2-deoxy-alpha-D-glucopyranoside</name>
        <dbReference type="ChEBI" id="CHEBI:58887"/>
    </ligand>
</feature>
<feature type="binding site" evidence="1">
    <location>
        <position position="240"/>
    </location>
    <ligand>
        <name>1D-myo-inositol 2-(L-cysteinylamino)-2-deoxy-alpha-D-glucopyranoside</name>
        <dbReference type="ChEBI" id="CHEBI:58887"/>
    </ligand>
</feature>
<feature type="binding site" evidence="1">
    <location>
        <begin position="244"/>
        <end position="246"/>
    </location>
    <ligand>
        <name>acetyl-CoA</name>
        <dbReference type="ChEBI" id="CHEBI:57288"/>
        <label>2</label>
    </ligand>
</feature>
<feature type="binding site" evidence="1">
    <location>
        <begin position="251"/>
        <end position="257"/>
    </location>
    <ligand>
        <name>acetyl-CoA</name>
        <dbReference type="ChEBI" id="CHEBI:57288"/>
        <label>2</label>
    </ligand>
</feature>
<feature type="binding site" evidence="1">
    <location>
        <position position="278"/>
    </location>
    <ligand>
        <name>1D-myo-inositol 2-(L-cysteinylamino)-2-deoxy-alpha-D-glucopyranoside</name>
        <dbReference type="ChEBI" id="CHEBI:58887"/>
    </ligand>
</feature>
<accession>Q82G40</accession>
<sequence length="308" mass="32903">MTSDDTVWPGAGRSIETLAALSPGQAEAVLALLDEAARVDGQPAVSEQGRLQLRGGEREGVRHLLLSAGDTLVGYAQLEDTDPVEAPAAELVVHPAHRGRGHGRALGTALLAATGKRLRAWAHGGHSAARHLAQVLGLTLFRELRQMRRPLAGLDLAEPKLPDGVTVRAFVPGQDDAAWLAVNAAAFAHHPEQGSLTQRDLDDRKAEPWFDPAGFFLAERDGELIGFHWTKVHAQEGIGEVYVLGVRPGAQGGGLGKALTTIGLRHLEAQGLPTAMLYVDADNKAAVSVYERLGFATHETDLMYRTES</sequence>
<name>MSHD_STRAW</name>
<protein>
    <recommendedName>
        <fullName evidence="1">Mycothiol acetyltransferase</fullName>
        <shortName evidence="1">MSH acetyltransferase</shortName>
        <ecNumber evidence="1">2.3.1.189</ecNumber>
    </recommendedName>
    <alternativeName>
        <fullName evidence="1">Mycothiol synthase</fullName>
    </alternativeName>
</protein>
<reference key="1">
    <citation type="journal article" date="2001" name="Proc. Natl. Acad. Sci. U.S.A.">
        <title>Genome sequence of an industrial microorganism Streptomyces avermitilis: deducing the ability of producing secondary metabolites.</title>
        <authorList>
            <person name="Omura S."/>
            <person name="Ikeda H."/>
            <person name="Ishikawa J."/>
            <person name="Hanamoto A."/>
            <person name="Takahashi C."/>
            <person name="Shinose M."/>
            <person name="Takahashi Y."/>
            <person name="Horikawa H."/>
            <person name="Nakazawa H."/>
            <person name="Osonoe T."/>
            <person name="Kikuchi H."/>
            <person name="Shiba T."/>
            <person name="Sakaki Y."/>
            <person name="Hattori M."/>
        </authorList>
    </citation>
    <scope>NUCLEOTIDE SEQUENCE [LARGE SCALE GENOMIC DNA]</scope>
    <source>
        <strain>ATCC 31267 / DSM 46492 / JCM 5070 / NBRC 14893 / NCIMB 12804 / NRRL 8165 / MA-4680</strain>
    </source>
</reference>
<reference key="2">
    <citation type="journal article" date="2003" name="Nat. Biotechnol.">
        <title>Complete genome sequence and comparative analysis of the industrial microorganism Streptomyces avermitilis.</title>
        <authorList>
            <person name="Ikeda H."/>
            <person name="Ishikawa J."/>
            <person name="Hanamoto A."/>
            <person name="Shinose M."/>
            <person name="Kikuchi H."/>
            <person name="Shiba T."/>
            <person name="Sakaki Y."/>
            <person name="Hattori M."/>
            <person name="Omura S."/>
        </authorList>
    </citation>
    <scope>NUCLEOTIDE SEQUENCE [LARGE SCALE GENOMIC DNA]</scope>
    <source>
        <strain>ATCC 31267 / DSM 46492 / JCM 5070 / NBRC 14893 / NCIMB 12804 / NRRL 8165 / MA-4680</strain>
    </source>
</reference>
<organism>
    <name type="scientific">Streptomyces avermitilis (strain ATCC 31267 / DSM 46492 / JCM 5070 / NBRC 14893 / NCIMB 12804 / NRRL 8165 / MA-4680)</name>
    <dbReference type="NCBI Taxonomy" id="227882"/>
    <lineage>
        <taxon>Bacteria</taxon>
        <taxon>Bacillati</taxon>
        <taxon>Actinomycetota</taxon>
        <taxon>Actinomycetes</taxon>
        <taxon>Kitasatosporales</taxon>
        <taxon>Streptomycetaceae</taxon>
        <taxon>Streptomyces</taxon>
    </lineage>
</organism>
<proteinExistence type="inferred from homology"/>
<dbReference type="EC" id="2.3.1.189" evidence="1"/>
<dbReference type="EMBL" id="BA000030">
    <property type="protein sequence ID" value="BAC71770.1"/>
    <property type="molecule type" value="Genomic_DNA"/>
</dbReference>
<dbReference type="RefSeq" id="WP_010985487.1">
    <property type="nucleotide sequence ID" value="NZ_JZJK01000060.1"/>
</dbReference>
<dbReference type="SMR" id="Q82G40"/>
<dbReference type="GeneID" id="41541122"/>
<dbReference type="KEGG" id="sma:SAVERM_4058"/>
<dbReference type="eggNOG" id="COG0456">
    <property type="taxonomic scope" value="Bacteria"/>
</dbReference>
<dbReference type="HOGENOM" id="CLU_068014_0_0_11"/>
<dbReference type="OrthoDB" id="3208058at2"/>
<dbReference type="Proteomes" id="UP000000428">
    <property type="component" value="Chromosome"/>
</dbReference>
<dbReference type="GO" id="GO:0035447">
    <property type="term" value="F:mycothiol synthase activity"/>
    <property type="evidence" value="ECO:0007669"/>
    <property type="project" value="UniProtKB-UniRule"/>
</dbReference>
<dbReference type="GO" id="GO:0010125">
    <property type="term" value="P:mycothiol biosynthetic process"/>
    <property type="evidence" value="ECO:0007669"/>
    <property type="project" value="UniProtKB-UniRule"/>
</dbReference>
<dbReference type="CDD" id="cd04301">
    <property type="entry name" value="NAT_SF"/>
    <property type="match status" value="2"/>
</dbReference>
<dbReference type="Gene3D" id="3.40.630.30">
    <property type="match status" value="1"/>
</dbReference>
<dbReference type="HAMAP" id="MF_01698">
    <property type="entry name" value="MshD"/>
    <property type="match status" value="1"/>
</dbReference>
<dbReference type="InterPro" id="IPR016181">
    <property type="entry name" value="Acyl_CoA_acyltransferase"/>
</dbReference>
<dbReference type="InterPro" id="IPR050832">
    <property type="entry name" value="Bact_Acetyltransf"/>
</dbReference>
<dbReference type="InterPro" id="IPR000182">
    <property type="entry name" value="GNAT_dom"/>
</dbReference>
<dbReference type="InterPro" id="IPR017813">
    <property type="entry name" value="Mycothiol_AcTrfase"/>
</dbReference>
<dbReference type="NCBIfam" id="TIGR03448">
    <property type="entry name" value="mycothiol_MshD"/>
    <property type="match status" value="1"/>
</dbReference>
<dbReference type="PANTHER" id="PTHR43877">
    <property type="entry name" value="AMINOALKYLPHOSPHONATE N-ACETYLTRANSFERASE-RELATED-RELATED"/>
    <property type="match status" value="1"/>
</dbReference>
<dbReference type="Pfam" id="PF00583">
    <property type="entry name" value="Acetyltransf_1"/>
    <property type="match status" value="1"/>
</dbReference>
<dbReference type="Pfam" id="PF13508">
    <property type="entry name" value="Acetyltransf_7"/>
    <property type="match status" value="1"/>
</dbReference>
<dbReference type="PIRSF" id="PIRSF021524">
    <property type="entry name" value="MSH_acetyltransferase"/>
    <property type="match status" value="1"/>
</dbReference>
<dbReference type="SUPFAM" id="SSF55729">
    <property type="entry name" value="Acyl-CoA N-acyltransferases (Nat)"/>
    <property type="match status" value="1"/>
</dbReference>
<dbReference type="PROSITE" id="PS51186">
    <property type="entry name" value="GNAT"/>
    <property type="match status" value="2"/>
</dbReference>
<keyword id="KW-0012">Acyltransferase</keyword>
<keyword id="KW-1185">Reference proteome</keyword>
<keyword id="KW-0677">Repeat</keyword>
<keyword id="KW-0808">Transferase</keyword>
<evidence type="ECO:0000255" key="1">
    <source>
        <dbReference type="HAMAP-Rule" id="MF_01698"/>
    </source>
</evidence>